<feature type="chain" id="PRO_1000088334" description="Ribonuclease Z">
    <location>
        <begin position="1"/>
        <end position="304"/>
    </location>
</feature>
<feature type="active site" description="Proton acceptor" evidence="1">
    <location>
        <position position="65"/>
    </location>
</feature>
<feature type="binding site" evidence="1">
    <location>
        <position position="61"/>
    </location>
    <ligand>
        <name>Zn(2+)</name>
        <dbReference type="ChEBI" id="CHEBI:29105"/>
        <label>1</label>
        <note>catalytic</note>
    </ligand>
</feature>
<feature type="binding site" evidence="1">
    <location>
        <position position="63"/>
    </location>
    <ligand>
        <name>Zn(2+)</name>
        <dbReference type="ChEBI" id="CHEBI:29105"/>
        <label>1</label>
        <note>catalytic</note>
    </ligand>
</feature>
<feature type="binding site" evidence="1">
    <location>
        <position position="65"/>
    </location>
    <ligand>
        <name>Zn(2+)</name>
        <dbReference type="ChEBI" id="CHEBI:29105"/>
        <label>2</label>
        <note>catalytic</note>
    </ligand>
</feature>
<feature type="binding site" evidence="1">
    <location>
        <position position="66"/>
    </location>
    <ligand>
        <name>Zn(2+)</name>
        <dbReference type="ChEBI" id="CHEBI:29105"/>
        <label>2</label>
        <note>catalytic</note>
    </ligand>
</feature>
<feature type="binding site" evidence="1">
    <location>
        <position position="138"/>
    </location>
    <ligand>
        <name>Zn(2+)</name>
        <dbReference type="ChEBI" id="CHEBI:29105"/>
        <label>1</label>
        <note>catalytic</note>
    </ligand>
</feature>
<feature type="binding site" evidence="1">
    <location>
        <position position="206"/>
    </location>
    <ligand>
        <name>Zn(2+)</name>
        <dbReference type="ChEBI" id="CHEBI:29105"/>
        <label>1</label>
        <note>catalytic</note>
    </ligand>
</feature>
<feature type="binding site" evidence="1">
    <location>
        <position position="206"/>
    </location>
    <ligand>
        <name>Zn(2+)</name>
        <dbReference type="ChEBI" id="CHEBI:29105"/>
        <label>2</label>
        <note>catalytic</note>
    </ligand>
</feature>
<feature type="binding site" evidence="1">
    <location>
        <position position="265"/>
    </location>
    <ligand>
        <name>Zn(2+)</name>
        <dbReference type="ChEBI" id="CHEBI:29105"/>
        <label>2</label>
        <note>catalytic</note>
    </ligand>
</feature>
<gene>
    <name evidence="1" type="primary">rnz</name>
    <name type="ordered locus">Cphy_0350</name>
</gene>
<comment type="function">
    <text evidence="1">Zinc phosphodiesterase, which displays some tRNA 3'-processing endonuclease activity. Probably involved in tRNA maturation, by removing a 3'-trailer from precursor tRNA.</text>
</comment>
<comment type="catalytic activity">
    <reaction evidence="1">
        <text>Endonucleolytic cleavage of RNA, removing extra 3' nucleotides from tRNA precursor, generating 3' termini of tRNAs. A 3'-hydroxy group is left at the tRNA terminus and a 5'-phosphoryl group is left at the trailer molecule.</text>
        <dbReference type="EC" id="3.1.26.11"/>
    </reaction>
</comment>
<comment type="cofactor">
    <cofactor evidence="1">
        <name>Zn(2+)</name>
        <dbReference type="ChEBI" id="CHEBI:29105"/>
    </cofactor>
    <text evidence="1">Binds 2 Zn(2+) ions.</text>
</comment>
<comment type="subunit">
    <text evidence="1">Homodimer.</text>
</comment>
<comment type="similarity">
    <text evidence="1">Belongs to the RNase Z family.</text>
</comment>
<proteinExistence type="inferred from homology"/>
<organism>
    <name type="scientific">Lachnoclostridium phytofermentans (strain ATCC 700394 / DSM 18823 / ISDg)</name>
    <name type="common">Clostridium phytofermentans</name>
    <dbReference type="NCBI Taxonomy" id="357809"/>
    <lineage>
        <taxon>Bacteria</taxon>
        <taxon>Bacillati</taxon>
        <taxon>Bacillota</taxon>
        <taxon>Clostridia</taxon>
        <taxon>Lachnospirales</taxon>
        <taxon>Lachnospiraceae</taxon>
    </lineage>
</organism>
<accession>A9KSU3</accession>
<reference key="1">
    <citation type="submission" date="2007-11" db="EMBL/GenBank/DDBJ databases">
        <title>Complete genome sequence of Clostridium phytofermentans ISDg.</title>
        <authorList>
            <person name="Leschine S.B."/>
            <person name="Warnick T.A."/>
            <person name="Blanchard J.L."/>
            <person name="Schnell D.J."/>
            <person name="Petit E.L."/>
            <person name="LaTouf W.G."/>
            <person name="Copeland A."/>
            <person name="Lucas S."/>
            <person name="Lapidus A."/>
            <person name="Barry K."/>
            <person name="Glavina del Rio T."/>
            <person name="Dalin E."/>
            <person name="Tice H."/>
            <person name="Pitluck S."/>
            <person name="Kiss H."/>
            <person name="Brettin T."/>
            <person name="Bruce D."/>
            <person name="Detter J.C."/>
            <person name="Han C."/>
            <person name="Kuske C."/>
            <person name="Schmutz J."/>
            <person name="Larimer F."/>
            <person name="Land M."/>
            <person name="Hauser L."/>
            <person name="Kyrpides N."/>
            <person name="Kim E.A."/>
            <person name="Richardson P."/>
        </authorList>
    </citation>
    <scope>NUCLEOTIDE SEQUENCE [LARGE SCALE GENOMIC DNA]</scope>
    <source>
        <strain>ATCC 700394 / DSM 18823 / ISDg</strain>
    </source>
</reference>
<keyword id="KW-0255">Endonuclease</keyword>
<keyword id="KW-0378">Hydrolase</keyword>
<keyword id="KW-0479">Metal-binding</keyword>
<keyword id="KW-0540">Nuclease</keyword>
<keyword id="KW-1185">Reference proteome</keyword>
<keyword id="KW-0819">tRNA processing</keyword>
<keyword id="KW-0862">Zinc</keyword>
<sequence length="304" mass="34300">MLDVCLLGTSGMMPLPGRWLTALMTRLNGSSLLIDCGEGTQIAIREKGWSFHSIDIICFTHYHGDHISGLPGLLLSMGNADRTQPVTVIGPKGLERVVSALRVIAPELPFELNFIEVTNPQETICVNDYVINAFRVNHNVICYGYTIEVKRTGRFIPEMAMQNEVPIELWSRLQKGQTIEKDSRVFTPDMILGPQRKGIKLTYCTDSRPVPQIIEQAQGSDLFICEGMYGEKEKQSNAIENKHMTFYEAAELAKQAGVKELWLTHYSPSLTRPEEYMKETKEIFPNAKAGKDRKSITLEFDKNE</sequence>
<protein>
    <recommendedName>
        <fullName evidence="1">Ribonuclease Z</fullName>
        <shortName evidence="1">RNase Z</shortName>
        <ecNumber evidence="1">3.1.26.11</ecNumber>
    </recommendedName>
    <alternativeName>
        <fullName evidence="1">tRNA 3 endonuclease</fullName>
    </alternativeName>
    <alternativeName>
        <fullName evidence="1">tRNase Z</fullName>
    </alternativeName>
</protein>
<evidence type="ECO:0000255" key="1">
    <source>
        <dbReference type="HAMAP-Rule" id="MF_01818"/>
    </source>
</evidence>
<name>RNZ_LACP7</name>
<dbReference type="EC" id="3.1.26.11" evidence="1"/>
<dbReference type="EMBL" id="CP000885">
    <property type="protein sequence ID" value="ABX40737.1"/>
    <property type="molecule type" value="Genomic_DNA"/>
</dbReference>
<dbReference type="RefSeq" id="WP_012198380.1">
    <property type="nucleotide sequence ID" value="NC_010001.1"/>
</dbReference>
<dbReference type="SMR" id="A9KSU3"/>
<dbReference type="STRING" id="357809.Cphy_0350"/>
<dbReference type="KEGG" id="cpy:Cphy_0350"/>
<dbReference type="eggNOG" id="COG1234">
    <property type="taxonomic scope" value="Bacteria"/>
</dbReference>
<dbReference type="HOGENOM" id="CLU_031317_2_1_9"/>
<dbReference type="OrthoDB" id="9800940at2"/>
<dbReference type="Proteomes" id="UP000000370">
    <property type="component" value="Chromosome"/>
</dbReference>
<dbReference type="GO" id="GO:0042781">
    <property type="term" value="F:3'-tRNA processing endoribonuclease activity"/>
    <property type="evidence" value="ECO:0007669"/>
    <property type="project" value="UniProtKB-UniRule"/>
</dbReference>
<dbReference type="GO" id="GO:0008270">
    <property type="term" value="F:zinc ion binding"/>
    <property type="evidence" value="ECO:0007669"/>
    <property type="project" value="UniProtKB-UniRule"/>
</dbReference>
<dbReference type="CDD" id="cd07717">
    <property type="entry name" value="RNaseZ_ZiPD-like_MBL-fold"/>
    <property type="match status" value="1"/>
</dbReference>
<dbReference type="Gene3D" id="3.60.15.10">
    <property type="entry name" value="Ribonuclease Z/Hydroxyacylglutathione hydrolase-like"/>
    <property type="match status" value="1"/>
</dbReference>
<dbReference type="HAMAP" id="MF_01818">
    <property type="entry name" value="RNase_Z_BN"/>
    <property type="match status" value="1"/>
</dbReference>
<dbReference type="InterPro" id="IPR001279">
    <property type="entry name" value="Metallo-B-lactamas"/>
</dbReference>
<dbReference type="InterPro" id="IPR036866">
    <property type="entry name" value="RibonucZ/Hydroxyglut_hydro"/>
</dbReference>
<dbReference type="InterPro" id="IPR013471">
    <property type="entry name" value="RNase_Z/BN"/>
</dbReference>
<dbReference type="NCBIfam" id="NF000801">
    <property type="entry name" value="PRK00055.1-3"/>
    <property type="match status" value="1"/>
</dbReference>
<dbReference type="NCBIfam" id="TIGR02651">
    <property type="entry name" value="RNase_Z"/>
    <property type="match status" value="1"/>
</dbReference>
<dbReference type="PANTHER" id="PTHR46018">
    <property type="entry name" value="ZINC PHOSPHODIESTERASE ELAC PROTEIN 1"/>
    <property type="match status" value="1"/>
</dbReference>
<dbReference type="PANTHER" id="PTHR46018:SF2">
    <property type="entry name" value="ZINC PHOSPHODIESTERASE ELAC PROTEIN 1"/>
    <property type="match status" value="1"/>
</dbReference>
<dbReference type="Pfam" id="PF00753">
    <property type="entry name" value="Lactamase_B"/>
    <property type="match status" value="1"/>
</dbReference>
<dbReference type="Pfam" id="PF12706">
    <property type="entry name" value="Lactamase_B_2"/>
    <property type="match status" value="1"/>
</dbReference>
<dbReference type="SUPFAM" id="SSF56281">
    <property type="entry name" value="Metallo-hydrolase/oxidoreductase"/>
    <property type="match status" value="1"/>
</dbReference>